<protein>
    <recommendedName>
        <fullName evidence="1">N-acetyl-gamma-glutamyl-phosphate reductase</fullName>
        <shortName evidence="1">AGPR</shortName>
        <ecNumber evidence="1">1.2.1.38</ecNumber>
    </recommendedName>
    <alternativeName>
        <fullName evidence="1 2">N-acetyl-glutamate semialdehyde dehydrogenase</fullName>
        <shortName evidence="1 2">NAGSA dehydrogenase</shortName>
    </alternativeName>
</protein>
<sequence length="345" mass="37634">MGILGASGYGGAELLRLLKAHPEVELVGFSSRKYEGRPLEAAWPQLWDGRLFAAQEEVLERAEVVFLALPNGLSMEIAPEALKAGKRVVDLSGDFRLPPEVYEAWYRIPHKSPDLYREAVYGLPELHREELKGARLVANPGCYVTAATLALAPLAAEGVLKGAFVVGLSGVSGAGREAEGTAFAEVNENLKPYKAGGTHRHIPEMERNLGRILAQGRRVRTHGEARAVRLSFTPHLVPMTRGILVTAEAEVEGAWSQESLEALYRDFYAGEPFVRVLKGLPETKATLGSNRVDVRPLYEERTGRVLVFAALDNLVKGMAGQAVQNLNLMLGLPEETALPKEGLWP</sequence>
<reference key="1">
    <citation type="journal article" date="1998" name="Microbiology">
        <title>Genes and enzymes of the acetyl cycle of arginine biosynthesis in the extreme thermophilic bacterium Thermus thermophilus HB27.</title>
        <authorList>
            <person name="Baetens M.C.Y."/>
            <person name="Legrain C."/>
            <person name="Boyen A."/>
            <person name="Glansdorff N."/>
        </authorList>
    </citation>
    <scope>NUCLEOTIDE SEQUENCE [GENOMIC DNA]</scope>
    <scope>PATHWAY</scope>
    <source>
        <strain>ATCC BAA-163 / DSM 7039 / HB27</strain>
    </source>
</reference>
<reference key="2">
    <citation type="journal article" date="2000" name="J. Bacteriol.">
        <title>Organization and expression of a Thermus thermophilus arginine cluster: presence of unidentified open reading frames and absence of a Shine-Dalgarno sequence.</title>
        <authorList>
            <person name="Sanchez R."/>
            <person name="Roovers M."/>
            <person name="Glansdorff N."/>
        </authorList>
    </citation>
    <scope>NUCLEOTIDE SEQUENCE [GENOMIC DNA]</scope>
    <source>
        <strain>ATCC BAA-163 / DSM 7039 / HB27</strain>
    </source>
</reference>
<reference key="3">
    <citation type="journal article" date="2004" name="Nat. Biotechnol.">
        <title>The genome sequence of the extreme thermophile Thermus thermophilus.</title>
        <authorList>
            <person name="Henne A."/>
            <person name="Brueggemann H."/>
            <person name="Raasch C."/>
            <person name="Wiezer A."/>
            <person name="Hartsch T."/>
            <person name="Liesegang H."/>
            <person name="Johann A."/>
            <person name="Lienard T."/>
            <person name="Gohl O."/>
            <person name="Martinez-Arias R."/>
            <person name="Jacobi C."/>
            <person name="Starkuviene V."/>
            <person name="Schlenczeck S."/>
            <person name="Dencker S."/>
            <person name="Huber R."/>
            <person name="Klenk H.-P."/>
            <person name="Kramer W."/>
            <person name="Merkl R."/>
            <person name="Gottschalk G."/>
            <person name="Fritz H.-J."/>
        </authorList>
    </citation>
    <scope>NUCLEOTIDE SEQUENCE [LARGE SCALE GENOMIC DNA]</scope>
    <source>
        <strain>ATCC BAA-163 / DSM 7039 / HB27</strain>
    </source>
</reference>
<keyword id="KW-0028">Amino-acid biosynthesis</keyword>
<keyword id="KW-0055">Arginine biosynthesis</keyword>
<keyword id="KW-0963">Cytoplasm</keyword>
<keyword id="KW-0521">NADP</keyword>
<keyword id="KW-0560">Oxidoreductase</keyword>
<gene>
    <name evidence="1 2" type="primary">argC</name>
    <name type="ordered locus">TT_C0836</name>
</gene>
<name>ARGC_THET2</name>
<dbReference type="EC" id="1.2.1.38" evidence="1"/>
<dbReference type="EMBL" id="Y10525">
    <property type="protein sequence ID" value="CAA71550.1"/>
    <property type="molecule type" value="Genomic_DNA"/>
</dbReference>
<dbReference type="EMBL" id="Y18353">
    <property type="protein sequence ID" value="CAA77142.1"/>
    <property type="molecule type" value="Genomic_DNA"/>
</dbReference>
<dbReference type="EMBL" id="AE017221">
    <property type="protein sequence ID" value="AAS81182.1"/>
    <property type="molecule type" value="Genomic_DNA"/>
</dbReference>
<dbReference type="RefSeq" id="WP_011173267.1">
    <property type="nucleotide sequence ID" value="NC_005835.1"/>
</dbReference>
<dbReference type="SMR" id="P96136"/>
<dbReference type="GeneID" id="3168562"/>
<dbReference type="KEGG" id="tth:TT_C0836"/>
<dbReference type="eggNOG" id="COG0002">
    <property type="taxonomic scope" value="Bacteria"/>
</dbReference>
<dbReference type="HOGENOM" id="CLU_006384_0_1_0"/>
<dbReference type="OrthoDB" id="9801289at2"/>
<dbReference type="UniPathway" id="UPA00068">
    <property type="reaction ID" value="UER00108"/>
</dbReference>
<dbReference type="Proteomes" id="UP000000592">
    <property type="component" value="Chromosome"/>
</dbReference>
<dbReference type="GO" id="GO:0005737">
    <property type="term" value="C:cytoplasm"/>
    <property type="evidence" value="ECO:0007669"/>
    <property type="project" value="UniProtKB-SubCell"/>
</dbReference>
<dbReference type="GO" id="GO:0003942">
    <property type="term" value="F:N-acetyl-gamma-glutamyl-phosphate reductase activity"/>
    <property type="evidence" value="ECO:0007669"/>
    <property type="project" value="UniProtKB-UniRule"/>
</dbReference>
<dbReference type="GO" id="GO:0051287">
    <property type="term" value="F:NAD binding"/>
    <property type="evidence" value="ECO:0007669"/>
    <property type="project" value="InterPro"/>
</dbReference>
<dbReference type="GO" id="GO:0070401">
    <property type="term" value="F:NADP+ binding"/>
    <property type="evidence" value="ECO:0007669"/>
    <property type="project" value="InterPro"/>
</dbReference>
<dbReference type="GO" id="GO:0006526">
    <property type="term" value="P:L-arginine biosynthetic process"/>
    <property type="evidence" value="ECO:0007669"/>
    <property type="project" value="UniProtKB-UniRule"/>
</dbReference>
<dbReference type="CDD" id="cd23934">
    <property type="entry name" value="AGPR_1_C"/>
    <property type="match status" value="1"/>
</dbReference>
<dbReference type="CDD" id="cd17895">
    <property type="entry name" value="AGPR_1_N"/>
    <property type="match status" value="1"/>
</dbReference>
<dbReference type="Gene3D" id="3.30.360.10">
    <property type="entry name" value="Dihydrodipicolinate Reductase, domain 2"/>
    <property type="match status" value="1"/>
</dbReference>
<dbReference type="Gene3D" id="3.40.50.720">
    <property type="entry name" value="NAD(P)-binding Rossmann-like Domain"/>
    <property type="match status" value="1"/>
</dbReference>
<dbReference type="HAMAP" id="MF_00150">
    <property type="entry name" value="ArgC_type1"/>
    <property type="match status" value="1"/>
</dbReference>
<dbReference type="InterPro" id="IPR023013">
    <property type="entry name" value="AGPR_AS"/>
</dbReference>
<dbReference type="InterPro" id="IPR000706">
    <property type="entry name" value="AGPR_type-1"/>
</dbReference>
<dbReference type="InterPro" id="IPR036291">
    <property type="entry name" value="NAD(P)-bd_dom_sf"/>
</dbReference>
<dbReference type="InterPro" id="IPR050085">
    <property type="entry name" value="NAGSA_dehydrogenase"/>
</dbReference>
<dbReference type="InterPro" id="IPR000534">
    <property type="entry name" value="Semialdehyde_DH_NAD-bd"/>
</dbReference>
<dbReference type="NCBIfam" id="TIGR01850">
    <property type="entry name" value="argC"/>
    <property type="match status" value="1"/>
</dbReference>
<dbReference type="PANTHER" id="PTHR32338:SF10">
    <property type="entry name" value="N-ACETYL-GAMMA-GLUTAMYL-PHOSPHATE REDUCTASE, CHLOROPLASTIC-RELATED"/>
    <property type="match status" value="1"/>
</dbReference>
<dbReference type="PANTHER" id="PTHR32338">
    <property type="entry name" value="N-ACETYL-GAMMA-GLUTAMYL-PHOSPHATE REDUCTASE, CHLOROPLASTIC-RELATED-RELATED"/>
    <property type="match status" value="1"/>
</dbReference>
<dbReference type="Pfam" id="PF01118">
    <property type="entry name" value="Semialdhyde_dh"/>
    <property type="match status" value="1"/>
</dbReference>
<dbReference type="Pfam" id="PF22698">
    <property type="entry name" value="Semialdhyde_dhC_1"/>
    <property type="match status" value="1"/>
</dbReference>
<dbReference type="SMART" id="SM00859">
    <property type="entry name" value="Semialdhyde_dh"/>
    <property type="match status" value="1"/>
</dbReference>
<dbReference type="SUPFAM" id="SSF55347">
    <property type="entry name" value="Glyceraldehyde-3-phosphate dehydrogenase-like, C-terminal domain"/>
    <property type="match status" value="1"/>
</dbReference>
<dbReference type="SUPFAM" id="SSF51735">
    <property type="entry name" value="NAD(P)-binding Rossmann-fold domains"/>
    <property type="match status" value="1"/>
</dbReference>
<dbReference type="PROSITE" id="PS01224">
    <property type="entry name" value="ARGC"/>
    <property type="match status" value="1"/>
</dbReference>
<comment type="function">
    <text evidence="1">Catalyzes the NADPH-dependent reduction of N-acetyl-5-glutamyl phosphate to yield N-acetyl-L-glutamate 5-semialdehyde.</text>
</comment>
<comment type="catalytic activity">
    <reaction evidence="1">
        <text>N-acetyl-L-glutamate 5-semialdehyde + phosphate + NADP(+) = N-acetyl-L-glutamyl 5-phosphate + NADPH + H(+)</text>
        <dbReference type="Rhea" id="RHEA:21588"/>
        <dbReference type="ChEBI" id="CHEBI:15378"/>
        <dbReference type="ChEBI" id="CHEBI:29123"/>
        <dbReference type="ChEBI" id="CHEBI:43474"/>
        <dbReference type="ChEBI" id="CHEBI:57783"/>
        <dbReference type="ChEBI" id="CHEBI:57936"/>
        <dbReference type="ChEBI" id="CHEBI:58349"/>
        <dbReference type="EC" id="1.2.1.38"/>
    </reaction>
</comment>
<comment type="pathway">
    <text evidence="1 4">Amino-acid biosynthesis; L-arginine biosynthesis; N(2)-acetyl-L-ornithine from L-glutamate: step 3/4.</text>
</comment>
<comment type="subcellular location">
    <subcellularLocation>
        <location evidence="1">Cytoplasm</location>
    </subcellularLocation>
</comment>
<comment type="similarity">
    <text evidence="1">Belongs to the NAGSA dehydrogenase family. Type 1 subfamily.</text>
</comment>
<feature type="chain" id="PRO_0000112468" description="N-acetyl-gamma-glutamyl-phosphate reductase">
    <location>
        <begin position="1"/>
        <end position="345"/>
    </location>
</feature>
<feature type="active site" evidence="1">
    <location>
        <position position="142"/>
    </location>
</feature>
<feature type="sequence conflict" description="In Ref. 1; CAA71550 and 2; CAA77142." evidence="3" ref="1 2">
    <original>F</original>
    <variation>L</variation>
    <location>
        <position position="183"/>
    </location>
</feature>
<feature type="sequence conflict" description="In Ref. 1; CAA71550 and 2; CAA77142." evidence="3" ref="1 2">
    <original>P</original>
    <variation>H</variation>
    <location>
        <position position="234"/>
    </location>
</feature>
<feature type="sequence conflict" description="In Ref. 1; CAA71550 and 2; CAA77142." evidence="3" ref="1 2">
    <original>ILVTAEAEVEGAWSQESLEALYRDFYAGEP</original>
    <variation>SWSPRGRGGGRLEPGEPRGALPGLLRRGA</variation>
    <location>
        <begin position="243"/>
        <end position="272"/>
    </location>
</feature>
<accession>P96136</accession>
<evidence type="ECO:0000255" key="1">
    <source>
        <dbReference type="HAMAP-Rule" id="MF_00150"/>
    </source>
</evidence>
<evidence type="ECO:0000303" key="2">
    <source>
    </source>
</evidence>
<evidence type="ECO:0000305" key="3"/>
<evidence type="ECO:0000305" key="4">
    <source>
    </source>
</evidence>
<proteinExistence type="inferred from homology"/>
<organism>
    <name type="scientific">Thermus thermophilus (strain ATCC BAA-163 / DSM 7039 / HB27)</name>
    <dbReference type="NCBI Taxonomy" id="262724"/>
    <lineage>
        <taxon>Bacteria</taxon>
        <taxon>Thermotogati</taxon>
        <taxon>Deinococcota</taxon>
        <taxon>Deinococci</taxon>
        <taxon>Thermales</taxon>
        <taxon>Thermaceae</taxon>
        <taxon>Thermus</taxon>
    </lineage>
</organism>